<dbReference type="EMBL" id="AC087181">
    <property type="protein sequence ID" value="AAX95660.1"/>
    <property type="molecule type" value="Genomic_DNA"/>
</dbReference>
<dbReference type="EMBL" id="DP000009">
    <property type="protein sequence ID" value="ABF98501.1"/>
    <property type="molecule type" value="Genomic_DNA"/>
</dbReference>
<dbReference type="EMBL" id="AP008209">
    <property type="protein sequence ID" value="BAF12962.1"/>
    <property type="molecule type" value="Genomic_DNA"/>
</dbReference>
<dbReference type="EMBL" id="AP014959">
    <property type="protein sequence ID" value="BAS86012.1"/>
    <property type="molecule type" value="Genomic_DNA"/>
</dbReference>
<dbReference type="SMR" id="Q53RJ5"/>
<dbReference type="FunCoup" id="Q53RJ5">
    <property type="interactions" value="1912"/>
</dbReference>
<dbReference type="STRING" id="39947.Q53RJ5"/>
<dbReference type="PaxDb" id="39947-Q53RJ5"/>
<dbReference type="EnsemblPlants" id="Os03t0710500-00">
    <property type="protein sequence ID" value="Os03t0710500-00"/>
    <property type="gene ID" value="Os03g0710500"/>
</dbReference>
<dbReference type="Gramene" id="Os03t0710500-00">
    <property type="protein sequence ID" value="Os03t0710500-00"/>
    <property type="gene ID" value="Os03g0710500"/>
</dbReference>
<dbReference type="KEGG" id="dosa:Os03g0710500"/>
<dbReference type="eggNOG" id="KOG0100">
    <property type="taxonomic scope" value="Eukaryota"/>
</dbReference>
<dbReference type="HOGENOM" id="CLU_005965_7_2_1"/>
<dbReference type="InParanoid" id="Q53RJ5"/>
<dbReference type="OMA" id="CTGYLCG"/>
<dbReference type="Proteomes" id="UP000000763">
    <property type="component" value="Chromosome 3"/>
</dbReference>
<dbReference type="Proteomes" id="UP000059680">
    <property type="component" value="Chromosome 3"/>
</dbReference>
<dbReference type="GO" id="GO:0005737">
    <property type="term" value="C:cytoplasm"/>
    <property type="evidence" value="ECO:0000318"/>
    <property type="project" value="GO_Central"/>
</dbReference>
<dbReference type="GO" id="GO:0034663">
    <property type="term" value="C:endoplasmic reticulum chaperone complex"/>
    <property type="evidence" value="ECO:0000318"/>
    <property type="project" value="GO_Central"/>
</dbReference>
<dbReference type="GO" id="GO:0005788">
    <property type="term" value="C:endoplasmic reticulum lumen"/>
    <property type="evidence" value="ECO:0000318"/>
    <property type="project" value="GO_Central"/>
</dbReference>
<dbReference type="GO" id="GO:0016020">
    <property type="term" value="C:membrane"/>
    <property type="evidence" value="ECO:0000318"/>
    <property type="project" value="GO_Central"/>
</dbReference>
<dbReference type="GO" id="GO:0005634">
    <property type="term" value="C:nucleus"/>
    <property type="evidence" value="ECO:0000318"/>
    <property type="project" value="GO_Central"/>
</dbReference>
<dbReference type="GO" id="GO:0005524">
    <property type="term" value="F:ATP binding"/>
    <property type="evidence" value="ECO:0007669"/>
    <property type="project" value="UniProtKB-KW"/>
</dbReference>
<dbReference type="GO" id="GO:0016887">
    <property type="term" value="F:ATP hydrolysis activity"/>
    <property type="evidence" value="ECO:0000318"/>
    <property type="project" value="GO_Central"/>
</dbReference>
<dbReference type="GO" id="GO:0140662">
    <property type="term" value="F:ATP-dependent protein folding chaperone"/>
    <property type="evidence" value="ECO:0007669"/>
    <property type="project" value="InterPro"/>
</dbReference>
<dbReference type="GO" id="GO:0031072">
    <property type="term" value="F:heat shock protein binding"/>
    <property type="evidence" value="ECO:0000318"/>
    <property type="project" value="GO_Central"/>
</dbReference>
<dbReference type="GO" id="GO:0044183">
    <property type="term" value="F:protein folding chaperone"/>
    <property type="evidence" value="ECO:0000318"/>
    <property type="project" value="GO_Central"/>
</dbReference>
<dbReference type="GO" id="GO:0051085">
    <property type="term" value="P:chaperone cofactor-dependent protein refolding"/>
    <property type="evidence" value="ECO:0000318"/>
    <property type="project" value="GO_Central"/>
</dbReference>
<dbReference type="GO" id="GO:0030968">
    <property type="term" value="P:endoplasmic reticulum unfolded protein response"/>
    <property type="evidence" value="ECO:0000318"/>
    <property type="project" value="GO_Central"/>
</dbReference>
<dbReference type="GO" id="GO:0036503">
    <property type="term" value="P:ERAD pathway"/>
    <property type="evidence" value="ECO:0000318"/>
    <property type="project" value="GO_Central"/>
</dbReference>
<dbReference type="GO" id="GO:0042026">
    <property type="term" value="P:protein refolding"/>
    <property type="evidence" value="ECO:0000318"/>
    <property type="project" value="GO_Central"/>
</dbReference>
<dbReference type="CDD" id="cd10241">
    <property type="entry name" value="ASKHA_NBD_HSP70_BiP"/>
    <property type="match status" value="1"/>
</dbReference>
<dbReference type="FunFam" id="3.90.640.10:FF:000153">
    <property type="entry name" value="Endoplasmic reticulum chaperone BiP"/>
    <property type="match status" value="1"/>
</dbReference>
<dbReference type="FunFam" id="2.60.34.10:FF:000002">
    <property type="entry name" value="Heat shock 70 kDa"/>
    <property type="match status" value="1"/>
</dbReference>
<dbReference type="FunFam" id="1.20.1270.10:FF:000044">
    <property type="entry name" value="Heat shock 70 kDa protein BIP2"/>
    <property type="match status" value="1"/>
</dbReference>
<dbReference type="FunFam" id="3.30.420.40:FF:000026">
    <property type="entry name" value="Heat shock protein 70"/>
    <property type="match status" value="1"/>
</dbReference>
<dbReference type="FunFam" id="3.30.30.30:FF:000005">
    <property type="entry name" value="Heat shock protein ssb1"/>
    <property type="match status" value="1"/>
</dbReference>
<dbReference type="Gene3D" id="1.20.1270.10">
    <property type="match status" value="1"/>
</dbReference>
<dbReference type="Gene3D" id="3.30.420.40">
    <property type="match status" value="2"/>
</dbReference>
<dbReference type="Gene3D" id="3.90.640.10">
    <property type="entry name" value="Actin, Chain A, domain 4"/>
    <property type="match status" value="1"/>
</dbReference>
<dbReference type="Gene3D" id="2.60.34.10">
    <property type="entry name" value="Substrate Binding Domain Of DNAk, Chain A, domain 1"/>
    <property type="match status" value="1"/>
</dbReference>
<dbReference type="InterPro" id="IPR043129">
    <property type="entry name" value="ATPase_NBD"/>
</dbReference>
<dbReference type="InterPro" id="IPR042050">
    <property type="entry name" value="BIP_NBD"/>
</dbReference>
<dbReference type="InterPro" id="IPR018181">
    <property type="entry name" value="Heat_shock_70_CS"/>
</dbReference>
<dbReference type="InterPro" id="IPR029048">
    <property type="entry name" value="HSP70_C_sf"/>
</dbReference>
<dbReference type="InterPro" id="IPR029047">
    <property type="entry name" value="HSP70_peptide-bd_sf"/>
</dbReference>
<dbReference type="InterPro" id="IPR013126">
    <property type="entry name" value="Hsp_70_fam"/>
</dbReference>
<dbReference type="NCBIfam" id="NF001413">
    <property type="entry name" value="PRK00290.1"/>
    <property type="match status" value="1"/>
</dbReference>
<dbReference type="PANTHER" id="PTHR19375">
    <property type="entry name" value="HEAT SHOCK PROTEIN 70KDA"/>
    <property type="match status" value="1"/>
</dbReference>
<dbReference type="Pfam" id="PF00012">
    <property type="entry name" value="HSP70"/>
    <property type="match status" value="1"/>
</dbReference>
<dbReference type="PRINTS" id="PR00301">
    <property type="entry name" value="HEATSHOCK70"/>
</dbReference>
<dbReference type="SUPFAM" id="SSF53067">
    <property type="entry name" value="Actin-like ATPase domain"/>
    <property type="match status" value="2"/>
</dbReference>
<dbReference type="SUPFAM" id="SSF100934">
    <property type="entry name" value="Heat shock protein 70kD (HSP70), C-terminal subdomain"/>
    <property type="match status" value="1"/>
</dbReference>
<dbReference type="SUPFAM" id="SSF100920">
    <property type="entry name" value="Heat shock protein 70kD (HSP70), peptide-binding domain"/>
    <property type="match status" value="1"/>
</dbReference>
<dbReference type="PROSITE" id="PS00297">
    <property type="entry name" value="HSP70_1"/>
    <property type="match status" value="1"/>
</dbReference>
<dbReference type="PROSITE" id="PS00329">
    <property type="entry name" value="HSP70_2"/>
    <property type="match status" value="1"/>
</dbReference>
<dbReference type="PROSITE" id="PS01036">
    <property type="entry name" value="HSP70_3"/>
    <property type="match status" value="1"/>
</dbReference>
<evidence type="ECO:0000250" key="1">
    <source>
        <dbReference type="UniProtKB" id="Q6Z7B0"/>
    </source>
</evidence>
<evidence type="ECO:0000255" key="2"/>
<evidence type="ECO:0000255" key="3">
    <source>
        <dbReference type="PROSITE-ProRule" id="PRU10138"/>
    </source>
</evidence>
<evidence type="ECO:0000269" key="4">
    <source>
    </source>
</evidence>
<evidence type="ECO:0000269" key="5">
    <source>
    </source>
</evidence>
<evidence type="ECO:0000303" key="6">
    <source>
    </source>
</evidence>
<evidence type="ECO:0000305" key="7"/>
<evidence type="ECO:0000312" key="8">
    <source>
        <dbReference type="EMBL" id="ABF98501.1"/>
    </source>
</evidence>
<evidence type="ECO:0000312" key="9">
    <source>
        <dbReference type="EMBL" id="BAF12962.1"/>
    </source>
</evidence>
<comment type="function">
    <text evidence="1">Functions as a chaperone during endoplasmic reticulum (ER) stress response.</text>
</comment>
<comment type="subcellular location">
    <subcellularLocation>
        <location evidence="3">Endoplasmic reticulum</location>
    </subcellularLocation>
</comment>
<comment type="induction">
    <text evidence="4 5">By dithiothreitol-induced endoplasmic reticulum (ER) stress response (PubMed:22050533, PubMed:24153418). Induced by tunicamycin-induced ER stress response (PubMed:24153418).</text>
</comment>
<comment type="similarity">
    <text evidence="7">Belongs to the heat shock protein 70 family.</text>
</comment>
<sequence>MARDKQSALIVAAFVLLCSGCLCGVADGAKGGRKTKGPVIGIDLGTTYSCVGVYRNGHVDIVANDQGNRITPSWVAFTDDERLVGEAAKNQAALNPDRTIFDIKRLIGRRFDDEEVQRDVKYLPYKVVDKGGKPYVEVRVKAGEVKVFSPEEISAMILAKMKETAESYLGQRVTDAVVTVPAYFNDAQRQATKDAGTIAGLNVPRIINEPTAAAIAYGLDRKGAGEMTNVLVYDLGGGTFDVSVLSLDHGVFEVLATSGDTHLGGEDFDRRVMDHFIRLVKRQHGRDIGGDGRALGKLRRECERAKRALSRQHQVRVEIEALFVGVDFSETLTRAKFEELNMDLFKKTLGPVRKAIADAKLKKSDIDEIVLVGGSTRIPKVQELLKEMFDGKEPTKGINPDEAVAYGAAVQGSIISGEGGAETKDILLLDVTPLTLGIETAGGVMTKLIPRNTRIPVKKSQVFTTYEDHQTTVSIKVFEGERSLTKDCRELGRFDLSGIAPAPRGVPQIEVTFEVDENGILHVTASDKAAGRSKSITITNDKGRLSQEEIDRMVREAEEFAEEDRRVRERVDARNRLENYVYRMRSAVRDGGMAGKIGDDDRERMESALTEALEWLEDNDGGARTAEKEDYEEKLKEVEQVCGPIIKQVYKKSGDASAGAGDDDDVNEL</sequence>
<feature type="signal peptide" evidence="2">
    <location>
        <begin position="1"/>
        <end position="28"/>
    </location>
</feature>
<feature type="chain" id="PRO_5008174748" description="Heat shock 70 kDa protein BIP2">
    <location>
        <begin position="29"/>
        <end position="669"/>
    </location>
</feature>
<feature type="short sequence motif" description="Prevents secretion from ER" evidence="3">
    <location>
        <begin position="666"/>
        <end position="669"/>
    </location>
</feature>
<proteinExistence type="evidence at transcript level"/>
<reference key="1">
    <citation type="journal article" date="2005" name="Genome Res.">
        <title>Sequence, annotation, and analysis of synteny between rice chromosome 3 and diverged grass species.</title>
        <authorList>
            <consortium name="The rice chromosome 3 sequencing consortium"/>
            <person name="Buell C.R."/>
            <person name="Yuan Q."/>
            <person name="Ouyang S."/>
            <person name="Liu J."/>
            <person name="Zhu W."/>
            <person name="Wang A."/>
            <person name="Maiti R."/>
            <person name="Haas B."/>
            <person name="Wortman J."/>
            <person name="Pertea M."/>
            <person name="Jones K.M."/>
            <person name="Kim M."/>
            <person name="Overton L."/>
            <person name="Tsitrin T."/>
            <person name="Fadrosh D."/>
            <person name="Bera J."/>
            <person name="Weaver B."/>
            <person name="Jin S."/>
            <person name="Johri S."/>
            <person name="Reardon M."/>
            <person name="Webb K."/>
            <person name="Hill J."/>
            <person name="Moffat K."/>
            <person name="Tallon L."/>
            <person name="Van Aken S."/>
            <person name="Lewis M."/>
            <person name="Utterback T."/>
            <person name="Feldblyum T."/>
            <person name="Zismann V."/>
            <person name="Iobst S."/>
            <person name="Hsiao J."/>
            <person name="de Vazeille A.R."/>
            <person name="Salzberg S.L."/>
            <person name="White O."/>
            <person name="Fraser C.M."/>
            <person name="Yu Y."/>
            <person name="Kim H."/>
            <person name="Rambo T."/>
            <person name="Currie J."/>
            <person name="Collura K."/>
            <person name="Kernodle-Thompson S."/>
            <person name="Wei F."/>
            <person name="Kudrna K."/>
            <person name="Ammiraju J.S.S."/>
            <person name="Luo M."/>
            <person name="Goicoechea J.L."/>
            <person name="Wing R.A."/>
            <person name="Henry D."/>
            <person name="Oates R."/>
            <person name="Palmer M."/>
            <person name="Pries G."/>
            <person name="Saski C."/>
            <person name="Simmons J."/>
            <person name="Soderlund C."/>
            <person name="Nelson W."/>
            <person name="de la Bastide M."/>
            <person name="Spiegel L."/>
            <person name="Nascimento L."/>
            <person name="Huang E."/>
            <person name="Preston R."/>
            <person name="Zutavern T."/>
            <person name="Palmer L."/>
            <person name="O'Shaughnessy A."/>
            <person name="Dike S."/>
            <person name="McCombie W.R."/>
            <person name="Minx P."/>
            <person name="Cordum H."/>
            <person name="Wilson R."/>
            <person name="Jin W."/>
            <person name="Lee H.R."/>
            <person name="Jiang J."/>
            <person name="Jackson S."/>
        </authorList>
    </citation>
    <scope>NUCLEOTIDE SEQUENCE [LARGE SCALE GENOMIC DNA]</scope>
    <source>
        <strain>cv. Nipponbare</strain>
    </source>
</reference>
<reference key="2">
    <citation type="journal article" date="2005" name="Nature">
        <title>The map-based sequence of the rice genome.</title>
        <authorList>
            <consortium name="International rice genome sequencing project (IRGSP)"/>
        </authorList>
    </citation>
    <scope>NUCLEOTIDE SEQUENCE [LARGE SCALE GENOMIC DNA]</scope>
    <source>
        <strain>cv. Nipponbare</strain>
    </source>
</reference>
<reference key="3">
    <citation type="journal article" date="2008" name="Nucleic Acids Res.">
        <title>The rice annotation project database (RAP-DB): 2008 update.</title>
        <authorList>
            <consortium name="The rice annotation project (RAP)"/>
        </authorList>
    </citation>
    <scope>GENOME REANNOTATION</scope>
    <source>
        <strain>cv. Nipponbare</strain>
    </source>
</reference>
<reference key="4">
    <citation type="journal article" date="2013" name="Rice">
        <title>Improvement of the Oryza sativa Nipponbare reference genome using next generation sequence and optical map data.</title>
        <authorList>
            <person name="Kawahara Y."/>
            <person name="de la Bastide M."/>
            <person name="Hamilton J.P."/>
            <person name="Kanamori H."/>
            <person name="McCombie W.R."/>
            <person name="Ouyang S."/>
            <person name="Schwartz D.C."/>
            <person name="Tanaka T."/>
            <person name="Wu J."/>
            <person name="Zhou S."/>
            <person name="Childs K.L."/>
            <person name="Davidson R.M."/>
            <person name="Lin H."/>
            <person name="Quesada-Ocampo L."/>
            <person name="Vaillancourt B."/>
            <person name="Sakai H."/>
            <person name="Lee S.S."/>
            <person name="Kim J."/>
            <person name="Numa H."/>
            <person name="Itoh T."/>
            <person name="Buell C.R."/>
            <person name="Matsumoto T."/>
        </authorList>
    </citation>
    <scope>GENOME REANNOTATION</scope>
    <source>
        <strain>cv. Nipponbare</strain>
    </source>
</reference>
<reference key="5">
    <citation type="journal article" date="2012" name="Plant J.">
        <title>Signal transduction by IRE1-mediated splicing of bZIP50 and other stress sensors in the endoplasmic reticulum stress response of rice.</title>
        <authorList>
            <person name="Hayashi S."/>
            <person name="Wakasa Y."/>
            <person name="Takahashi H."/>
            <person name="Kawakatsu T."/>
            <person name="Takaiwa F."/>
        </authorList>
    </citation>
    <scope>INDUCTION BY DITHIOTHREITOL</scope>
    <scope>GENE FAMILY</scope>
    <scope>NOMENCLATURE</scope>
</reference>
<reference key="6">
    <citation type="journal article" date="2013" name="J. Exp. Bot.">
        <title>Analysis of rice ER-resident J-proteins reveals diversity and functional differentiation of the ER-resident Hsp70 system in plants.</title>
        <authorList>
            <person name="Ohta M."/>
            <person name="Wakasa Y."/>
            <person name="Takahashi H."/>
            <person name="Hayashi S."/>
            <person name="Kudo K."/>
            <person name="Takaiwa F."/>
        </authorList>
    </citation>
    <scope>INDUCTION</scope>
</reference>
<keyword id="KW-0067">ATP-binding</keyword>
<keyword id="KW-0143">Chaperone</keyword>
<keyword id="KW-0256">Endoplasmic reticulum</keyword>
<keyword id="KW-0547">Nucleotide-binding</keyword>
<keyword id="KW-1185">Reference proteome</keyword>
<keyword id="KW-0732">Signal</keyword>
<keyword id="KW-0346">Stress response</keyword>
<gene>
    <name evidence="6" type="primary">BIP2</name>
    <name evidence="9" type="ordered locus">Os03g0710500</name>
    <name evidence="8" type="ordered locus">LOC_Os03g50250</name>
</gene>
<protein>
    <recommendedName>
        <fullName evidence="7">Heat shock 70 kDa protein BIP2</fullName>
    </recommendedName>
    <alternativeName>
        <fullName evidence="7">Luminal-binding protein 2</fullName>
        <shortName evidence="6">OsBiP2</shortName>
    </alternativeName>
</protein>
<name>BIP2_ORYSJ</name>
<accession>Q53RJ5</accession>
<organism>
    <name type="scientific">Oryza sativa subsp. japonica</name>
    <name type="common">Rice</name>
    <dbReference type="NCBI Taxonomy" id="39947"/>
    <lineage>
        <taxon>Eukaryota</taxon>
        <taxon>Viridiplantae</taxon>
        <taxon>Streptophyta</taxon>
        <taxon>Embryophyta</taxon>
        <taxon>Tracheophyta</taxon>
        <taxon>Spermatophyta</taxon>
        <taxon>Magnoliopsida</taxon>
        <taxon>Liliopsida</taxon>
        <taxon>Poales</taxon>
        <taxon>Poaceae</taxon>
        <taxon>BOP clade</taxon>
        <taxon>Oryzoideae</taxon>
        <taxon>Oryzeae</taxon>
        <taxon>Oryzinae</taxon>
        <taxon>Oryza</taxon>
        <taxon>Oryza sativa</taxon>
    </lineage>
</organism>